<reference key="1">
    <citation type="journal article" date="2002" name="Proc. Natl. Acad. Sci. U.S.A.">
        <title>Extensive mosaic structure revealed by the complete genome sequence of uropathogenic Escherichia coli.</title>
        <authorList>
            <person name="Welch R.A."/>
            <person name="Burland V."/>
            <person name="Plunkett G. III"/>
            <person name="Redford P."/>
            <person name="Roesch P."/>
            <person name="Rasko D."/>
            <person name="Buckles E.L."/>
            <person name="Liou S.-R."/>
            <person name="Boutin A."/>
            <person name="Hackett J."/>
            <person name="Stroud D."/>
            <person name="Mayhew G.F."/>
            <person name="Rose D.J."/>
            <person name="Zhou S."/>
            <person name="Schwartz D.C."/>
            <person name="Perna N.T."/>
            <person name="Mobley H.L.T."/>
            <person name="Donnenberg M.S."/>
            <person name="Blattner F.R."/>
        </authorList>
    </citation>
    <scope>NUCLEOTIDE SEQUENCE [LARGE SCALE GENOMIC DNA]</scope>
    <source>
        <strain>CFT073 / ATCC 700928 / UPEC</strain>
    </source>
</reference>
<dbReference type="EC" id="2.4.99.28" evidence="2"/>
<dbReference type="EMBL" id="AE014075">
    <property type="protein sequence ID" value="AAN78605.1"/>
    <property type="status" value="ALT_INIT"/>
    <property type="molecule type" value="Genomic_DNA"/>
</dbReference>
<dbReference type="RefSeq" id="WP_001295532.1">
    <property type="nucleotide sequence ID" value="NZ_CP051263.1"/>
</dbReference>
<dbReference type="SMR" id="P0ABG5"/>
<dbReference type="STRING" id="199310.c0107"/>
<dbReference type="GeneID" id="93777345"/>
<dbReference type="KEGG" id="ecc:c0107"/>
<dbReference type="eggNOG" id="COG0772">
    <property type="taxonomic scope" value="Bacteria"/>
</dbReference>
<dbReference type="HOGENOM" id="CLU_029243_1_1_6"/>
<dbReference type="UniPathway" id="UPA00219"/>
<dbReference type="Proteomes" id="UP000001410">
    <property type="component" value="Chromosome"/>
</dbReference>
<dbReference type="GO" id="GO:0032153">
    <property type="term" value="C:cell division site"/>
    <property type="evidence" value="ECO:0007669"/>
    <property type="project" value="UniProtKB-UniRule"/>
</dbReference>
<dbReference type="GO" id="GO:0005886">
    <property type="term" value="C:plasma membrane"/>
    <property type="evidence" value="ECO:0007669"/>
    <property type="project" value="UniProtKB-SubCell"/>
</dbReference>
<dbReference type="GO" id="GO:0015648">
    <property type="term" value="F:lipid-linked peptidoglycan transporter activity"/>
    <property type="evidence" value="ECO:0007669"/>
    <property type="project" value="TreeGrafter"/>
</dbReference>
<dbReference type="GO" id="GO:0008955">
    <property type="term" value="F:peptidoglycan glycosyltransferase activity"/>
    <property type="evidence" value="ECO:0007669"/>
    <property type="project" value="UniProtKB-UniRule"/>
</dbReference>
<dbReference type="GO" id="GO:0071555">
    <property type="term" value="P:cell wall organization"/>
    <property type="evidence" value="ECO:0007669"/>
    <property type="project" value="UniProtKB-KW"/>
</dbReference>
<dbReference type="GO" id="GO:0043093">
    <property type="term" value="P:FtsZ-dependent cytokinesis"/>
    <property type="evidence" value="ECO:0007669"/>
    <property type="project" value="UniProtKB-UniRule"/>
</dbReference>
<dbReference type="GO" id="GO:0009252">
    <property type="term" value="P:peptidoglycan biosynthetic process"/>
    <property type="evidence" value="ECO:0007669"/>
    <property type="project" value="UniProtKB-UniRule"/>
</dbReference>
<dbReference type="GO" id="GO:0008360">
    <property type="term" value="P:regulation of cell shape"/>
    <property type="evidence" value="ECO:0007669"/>
    <property type="project" value="UniProtKB-KW"/>
</dbReference>
<dbReference type="HAMAP" id="MF_00913">
    <property type="entry name" value="PGT_FtsW_proteobact"/>
    <property type="match status" value="1"/>
</dbReference>
<dbReference type="InterPro" id="IPR018365">
    <property type="entry name" value="Cell_cycle_FtsW-rel_CS"/>
</dbReference>
<dbReference type="InterPro" id="IPR013437">
    <property type="entry name" value="FtsW"/>
</dbReference>
<dbReference type="InterPro" id="IPR001182">
    <property type="entry name" value="FtsW/RodA"/>
</dbReference>
<dbReference type="NCBIfam" id="TIGR02614">
    <property type="entry name" value="ftsW"/>
    <property type="match status" value="1"/>
</dbReference>
<dbReference type="NCBIfam" id="NF008042">
    <property type="entry name" value="PRK10774.1"/>
    <property type="match status" value="1"/>
</dbReference>
<dbReference type="PANTHER" id="PTHR30474">
    <property type="entry name" value="CELL CYCLE PROTEIN"/>
    <property type="match status" value="1"/>
</dbReference>
<dbReference type="PANTHER" id="PTHR30474:SF2">
    <property type="entry name" value="PEPTIDOGLYCAN GLYCOSYLTRANSFERASE FTSW-RELATED"/>
    <property type="match status" value="1"/>
</dbReference>
<dbReference type="Pfam" id="PF01098">
    <property type="entry name" value="FTSW_RODA_SPOVE"/>
    <property type="match status" value="1"/>
</dbReference>
<dbReference type="PROSITE" id="PS00428">
    <property type="entry name" value="FTSW_RODA_SPOVE"/>
    <property type="match status" value="1"/>
</dbReference>
<name>FTSW_ECOL6</name>
<gene>
    <name evidence="2" type="primary">ftsW</name>
    <name type="ordered locus">c0107</name>
</gene>
<proteinExistence type="inferred from homology"/>
<comment type="function">
    <text evidence="2">Peptidoglycan polymerase that is essential for cell division.</text>
</comment>
<comment type="catalytic activity">
    <reaction evidence="2">
        <text>[GlcNAc-(1-&gt;4)-Mur2Ac(oyl-L-Ala-gamma-D-Glu-L-Lys-D-Ala-D-Ala)](n)-di-trans,octa-cis-undecaprenyl diphosphate + beta-D-GlcNAc-(1-&gt;4)-Mur2Ac(oyl-L-Ala-gamma-D-Glu-L-Lys-D-Ala-D-Ala)-di-trans,octa-cis-undecaprenyl diphosphate = [GlcNAc-(1-&gt;4)-Mur2Ac(oyl-L-Ala-gamma-D-Glu-L-Lys-D-Ala-D-Ala)](n+1)-di-trans,octa-cis-undecaprenyl diphosphate + di-trans,octa-cis-undecaprenyl diphosphate + H(+)</text>
        <dbReference type="Rhea" id="RHEA:23708"/>
        <dbReference type="Rhea" id="RHEA-COMP:9602"/>
        <dbReference type="Rhea" id="RHEA-COMP:9603"/>
        <dbReference type="ChEBI" id="CHEBI:15378"/>
        <dbReference type="ChEBI" id="CHEBI:58405"/>
        <dbReference type="ChEBI" id="CHEBI:60033"/>
        <dbReference type="ChEBI" id="CHEBI:78435"/>
        <dbReference type="EC" id="2.4.99.28"/>
    </reaction>
</comment>
<comment type="pathway">
    <text evidence="2">Cell wall biogenesis; peptidoglycan biosynthesis.</text>
</comment>
<comment type="subcellular location">
    <subcellularLocation>
        <location evidence="2">Cell inner membrane</location>
        <topology evidence="2">Multi-pass membrane protein</topology>
    </subcellularLocation>
    <text evidence="2">Localizes to the division septum.</text>
</comment>
<comment type="similarity">
    <text evidence="2">Belongs to the SEDS family. FtsW subfamily.</text>
</comment>
<comment type="sequence caution" evidence="3">
    <conflict type="erroneous initiation">
        <sequence resource="EMBL-CDS" id="AAN78605"/>
    </conflict>
    <text>Extended N-terminus.</text>
</comment>
<organism>
    <name type="scientific">Escherichia coli O6:H1 (strain CFT073 / ATCC 700928 / UPEC)</name>
    <dbReference type="NCBI Taxonomy" id="199310"/>
    <lineage>
        <taxon>Bacteria</taxon>
        <taxon>Pseudomonadati</taxon>
        <taxon>Pseudomonadota</taxon>
        <taxon>Gammaproteobacteria</taxon>
        <taxon>Enterobacterales</taxon>
        <taxon>Enterobacteriaceae</taxon>
        <taxon>Escherichia</taxon>
    </lineage>
</organism>
<accession>P0ABG5</accession>
<accession>P16457</accession>
<sequence length="414" mass="45987">MRLSLPRLKMPRLPGFSILVWISTALKGWVMGSREKDTDSLIMYDRTLLWLTFGLAAIGFIMVTSASMPIGQRLTNDPFFFAKRDGVYLILAFILAIITLRLPMEFWQRYSATMLLGSIILLMIVLVVGSSVKGASRWIDLGLLRIQPAELTKLSLFCYIANYLVRKGDEVRNNLRGFLKPMGVILVLAVLLLAQPDLGTVVVLFVTTLAMLFLAGAKLWQFIAIIGMGISAVVLLILAEPYRIRRVTAFWNPWEDPFGSGYQLTQSLMAFGRGELWGQGLGNSVQKLEYLPEAHTDFIFAIIGEELGYVGVVLALLMVFFVAFRAMSIGRKALEIDHRFSGFLACSIGIWFSFQALVNVGAAAGMLPTKGLTLPLISYGGSSLLIMSTAIMMLLRIDYETRLEKAQAFVRGSR</sequence>
<evidence type="ECO:0000255" key="1"/>
<evidence type="ECO:0000255" key="2">
    <source>
        <dbReference type="HAMAP-Rule" id="MF_00913"/>
    </source>
</evidence>
<evidence type="ECO:0000305" key="3"/>
<keyword id="KW-0131">Cell cycle</keyword>
<keyword id="KW-0132">Cell division</keyword>
<keyword id="KW-0997">Cell inner membrane</keyword>
<keyword id="KW-1003">Cell membrane</keyword>
<keyword id="KW-0133">Cell shape</keyword>
<keyword id="KW-0961">Cell wall biogenesis/degradation</keyword>
<keyword id="KW-0328">Glycosyltransferase</keyword>
<keyword id="KW-0472">Membrane</keyword>
<keyword id="KW-0573">Peptidoglycan synthesis</keyword>
<keyword id="KW-1185">Reference proteome</keyword>
<keyword id="KW-0808">Transferase</keyword>
<keyword id="KW-0812">Transmembrane</keyword>
<keyword id="KW-1133">Transmembrane helix</keyword>
<feature type="chain" id="PRO_0000062702" description="Probable peptidoglycan glycosyltransferase FtsW">
    <location>
        <begin position="1"/>
        <end position="414"/>
    </location>
</feature>
<feature type="topological domain" description="Cytoplasmic" evidence="1">
    <location>
        <begin position="1"/>
        <end position="12"/>
    </location>
</feature>
<feature type="transmembrane region" description="Helical" evidence="2">
    <location>
        <begin position="13"/>
        <end position="33"/>
    </location>
</feature>
<feature type="topological domain" description="Periplasmic" evidence="1">
    <location>
        <begin position="34"/>
        <end position="47"/>
    </location>
</feature>
<feature type="transmembrane region" description="Helical" evidence="2">
    <location>
        <begin position="48"/>
        <end position="68"/>
    </location>
</feature>
<feature type="topological domain" description="Cytoplasmic" evidence="1">
    <location>
        <begin position="69"/>
        <end position="86"/>
    </location>
</feature>
<feature type="transmembrane region" description="Helical" evidence="2">
    <location>
        <begin position="87"/>
        <end position="107"/>
    </location>
</feature>
<feature type="topological domain" description="Periplasmic" evidence="1">
    <location>
        <begin position="108"/>
        <end position="111"/>
    </location>
</feature>
<feature type="transmembrane region" description="Helical" evidence="2">
    <location>
        <begin position="112"/>
        <end position="132"/>
    </location>
</feature>
<feature type="topological domain" description="Cytoplasmic" evidence="1">
    <location>
        <begin position="133"/>
        <end position="174"/>
    </location>
</feature>
<feature type="transmembrane region" description="Helical" evidence="2">
    <location>
        <begin position="175"/>
        <end position="194"/>
    </location>
</feature>
<feature type="topological domain" description="Periplasmic" evidence="1">
    <location>
        <begin position="195"/>
        <end position="197"/>
    </location>
</feature>
<feature type="transmembrane region" description="Helical" evidence="2">
    <location>
        <begin position="198"/>
        <end position="217"/>
    </location>
</feature>
<feature type="topological domain" description="Cytoplasmic" evidence="1">
    <location>
        <position position="218"/>
    </location>
</feature>
<feature type="transmembrane region" description="Helical" evidence="2">
    <location>
        <begin position="219"/>
        <end position="239"/>
    </location>
</feature>
<feature type="topological domain" description="Periplasmic" evidence="1">
    <location>
        <begin position="240"/>
        <end position="301"/>
    </location>
</feature>
<feature type="transmembrane region" description="Helical" evidence="2">
    <location>
        <begin position="302"/>
        <end position="322"/>
    </location>
</feature>
<feature type="topological domain" description="Cytoplasmic" evidence="1">
    <location>
        <begin position="323"/>
        <end position="342"/>
    </location>
</feature>
<feature type="transmembrane region" description="Helical" evidence="2">
    <location>
        <begin position="343"/>
        <end position="363"/>
    </location>
</feature>
<feature type="topological domain" description="Periplasmic" evidence="1">
    <location>
        <begin position="364"/>
        <end position="373"/>
    </location>
</feature>
<feature type="transmembrane region" description="Helical" evidence="2">
    <location>
        <begin position="374"/>
        <end position="394"/>
    </location>
</feature>
<feature type="topological domain" description="Cytoplasmic" evidence="1">
    <location>
        <begin position="395"/>
        <end position="414"/>
    </location>
</feature>
<protein>
    <recommendedName>
        <fullName evidence="2">Probable peptidoglycan glycosyltransferase FtsW</fullName>
        <shortName evidence="2">PGT</shortName>
        <ecNumber evidence="2">2.4.99.28</ecNumber>
    </recommendedName>
    <alternativeName>
        <fullName evidence="2">Cell division protein FtsW</fullName>
    </alternativeName>
    <alternativeName>
        <fullName evidence="2">Cell wall polymerase</fullName>
    </alternativeName>
    <alternativeName>
        <fullName evidence="2">Peptidoglycan polymerase</fullName>
        <shortName evidence="2">PG polymerase</shortName>
    </alternativeName>
</protein>